<dbReference type="EMBL" id="BX569695">
    <property type="protein sequence ID" value="CAE08960.1"/>
    <property type="molecule type" value="Genomic_DNA"/>
</dbReference>
<dbReference type="RefSeq" id="WP_011129298.1">
    <property type="nucleotide sequence ID" value="NC_005070.1"/>
</dbReference>
<dbReference type="SMR" id="Q7U3I7"/>
<dbReference type="STRING" id="84588.SYNW2445"/>
<dbReference type="KEGG" id="syw:SYNW2445"/>
<dbReference type="eggNOG" id="COG2371">
    <property type="taxonomic scope" value="Bacteria"/>
</dbReference>
<dbReference type="HOGENOM" id="CLU_093757_2_0_3"/>
<dbReference type="Proteomes" id="UP000001422">
    <property type="component" value="Chromosome"/>
</dbReference>
<dbReference type="GO" id="GO:0005737">
    <property type="term" value="C:cytoplasm"/>
    <property type="evidence" value="ECO:0007669"/>
    <property type="project" value="UniProtKB-SubCell"/>
</dbReference>
<dbReference type="GO" id="GO:0016151">
    <property type="term" value="F:nickel cation binding"/>
    <property type="evidence" value="ECO:0007669"/>
    <property type="project" value="UniProtKB-UniRule"/>
</dbReference>
<dbReference type="GO" id="GO:0051082">
    <property type="term" value="F:unfolded protein binding"/>
    <property type="evidence" value="ECO:0007669"/>
    <property type="project" value="UniProtKB-UniRule"/>
</dbReference>
<dbReference type="GO" id="GO:0006457">
    <property type="term" value="P:protein folding"/>
    <property type="evidence" value="ECO:0007669"/>
    <property type="project" value="InterPro"/>
</dbReference>
<dbReference type="GO" id="GO:0065003">
    <property type="term" value="P:protein-containing complex assembly"/>
    <property type="evidence" value="ECO:0007669"/>
    <property type="project" value="InterPro"/>
</dbReference>
<dbReference type="GO" id="GO:0019627">
    <property type="term" value="P:urea metabolic process"/>
    <property type="evidence" value="ECO:0007669"/>
    <property type="project" value="InterPro"/>
</dbReference>
<dbReference type="CDD" id="cd00571">
    <property type="entry name" value="UreE"/>
    <property type="match status" value="1"/>
</dbReference>
<dbReference type="Gene3D" id="2.60.260.20">
    <property type="entry name" value="Urease metallochaperone UreE, N-terminal domain"/>
    <property type="match status" value="1"/>
</dbReference>
<dbReference type="Gene3D" id="3.30.70.790">
    <property type="entry name" value="UreE, C-terminal domain"/>
    <property type="match status" value="1"/>
</dbReference>
<dbReference type="HAMAP" id="MF_00822">
    <property type="entry name" value="UreE"/>
    <property type="match status" value="1"/>
</dbReference>
<dbReference type="InterPro" id="IPR012406">
    <property type="entry name" value="UreE"/>
</dbReference>
<dbReference type="InterPro" id="IPR007864">
    <property type="entry name" value="UreE_C_dom"/>
</dbReference>
<dbReference type="InterPro" id="IPR004029">
    <property type="entry name" value="UreE_N"/>
</dbReference>
<dbReference type="InterPro" id="IPR036118">
    <property type="entry name" value="UreE_N_sf"/>
</dbReference>
<dbReference type="NCBIfam" id="NF009751">
    <property type="entry name" value="PRK13261.1-1"/>
    <property type="match status" value="1"/>
</dbReference>
<dbReference type="NCBIfam" id="NF009756">
    <property type="entry name" value="PRK13261.2-2"/>
    <property type="match status" value="1"/>
</dbReference>
<dbReference type="Pfam" id="PF05194">
    <property type="entry name" value="UreE_C"/>
    <property type="match status" value="1"/>
</dbReference>
<dbReference type="Pfam" id="PF02814">
    <property type="entry name" value="UreE_N"/>
    <property type="match status" value="1"/>
</dbReference>
<dbReference type="PIRSF" id="PIRSF036402">
    <property type="entry name" value="Ureas_acces_UreE"/>
    <property type="match status" value="1"/>
</dbReference>
<dbReference type="SMART" id="SM00988">
    <property type="entry name" value="UreE_N"/>
    <property type="match status" value="1"/>
</dbReference>
<dbReference type="SUPFAM" id="SSF69737">
    <property type="entry name" value="Urease metallochaperone UreE, C-terminal domain"/>
    <property type="match status" value="1"/>
</dbReference>
<dbReference type="SUPFAM" id="SSF69287">
    <property type="entry name" value="Urease metallochaperone UreE, N-terminal domain"/>
    <property type="match status" value="1"/>
</dbReference>
<comment type="function">
    <text evidence="1">Involved in urease metallocenter assembly. Binds nickel. Probably functions as a nickel donor during metallocenter assembly.</text>
</comment>
<comment type="subcellular location">
    <subcellularLocation>
        <location evidence="1">Cytoplasm</location>
    </subcellularLocation>
</comment>
<comment type="similarity">
    <text evidence="1">Belongs to the UreE family.</text>
</comment>
<proteinExistence type="inferred from homology"/>
<organism>
    <name type="scientific">Parasynechococcus marenigrum (strain WH8102)</name>
    <dbReference type="NCBI Taxonomy" id="84588"/>
    <lineage>
        <taxon>Bacteria</taxon>
        <taxon>Bacillati</taxon>
        <taxon>Cyanobacteriota</taxon>
        <taxon>Cyanophyceae</taxon>
        <taxon>Synechococcales</taxon>
        <taxon>Prochlorococcaceae</taxon>
        <taxon>Parasynechococcus</taxon>
        <taxon>Parasynechococcus marenigrum</taxon>
    </lineage>
</organism>
<gene>
    <name evidence="1" type="primary">ureE</name>
    <name type="ordered locus">SYNW2445</name>
</gene>
<reference key="1">
    <citation type="journal article" date="2003" name="Nature">
        <title>The genome of a motile marine Synechococcus.</title>
        <authorList>
            <person name="Palenik B."/>
            <person name="Brahamsha B."/>
            <person name="Larimer F.W."/>
            <person name="Land M.L."/>
            <person name="Hauser L."/>
            <person name="Chain P."/>
            <person name="Lamerdin J.E."/>
            <person name="Regala W."/>
            <person name="Allen E.E."/>
            <person name="McCarren J."/>
            <person name="Paulsen I.T."/>
            <person name="Dufresne A."/>
            <person name="Partensky F."/>
            <person name="Webb E.A."/>
            <person name="Waterbury J."/>
        </authorList>
    </citation>
    <scope>NUCLEOTIDE SEQUENCE [LARGE SCALE GENOMIC DNA]</scope>
    <source>
        <strain>WH8102</strain>
    </source>
</reference>
<name>UREE_PARMW</name>
<keyword id="KW-0143">Chaperone</keyword>
<keyword id="KW-0963">Cytoplasm</keyword>
<keyword id="KW-0533">Nickel</keyword>
<keyword id="KW-0996">Nickel insertion</keyword>
<feature type="chain" id="PRO_0000223451" description="Urease accessory protein UreE">
    <location>
        <begin position="1"/>
        <end position="150"/>
    </location>
</feature>
<accession>Q7U3I7</accession>
<protein>
    <recommendedName>
        <fullName evidence="1">Urease accessory protein UreE</fullName>
    </recommendedName>
</protein>
<sequence length="150" mass="16358">MTQAVLVLDQRLAARADQADLLLPLTADERSVVRGRRRTDCGREVLLQLPRDGALQPGDQLSDAAGTARVEVTAATEALLRVRATSALALMQAAYHLGNRHVALELHEQDLYLLEDAVLATMLESRGLQLSRCQRPFRPEGGAYAGHQHG</sequence>
<evidence type="ECO:0000255" key="1">
    <source>
        <dbReference type="HAMAP-Rule" id="MF_00822"/>
    </source>
</evidence>